<feature type="chain" id="PRO_0000088576" description="Photosystem I P700 chlorophyll a apoprotein A1">
    <location>
        <begin position="1" status="less than"/>
        <end position="720" status="greater than"/>
    </location>
</feature>
<feature type="transmembrane region" description="Helical; Name=I" evidence="1">
    <location>
        <begin position="61"/>
        <end position="84"/>
    </location>
</feature>
<feature type="transmembrane region" description="Helical; Name=II" evidence="1">
    <location>
        <begin position="147"/>
        <end position="170"/>
    </location>
</feature>
<feature type="transmembrane region" description="Helical; Name=III" evidence="1">
    <location>
        <begin position="186"/>
        <end position="210"/>
    </location>
</feature>
<feature type="transmembrane region" description="Helical; Name=IV" evidence="1">
    <location>
        <begin position="282"/>
        <end position="300"/>
    </location>
</feature>
<feature type="transmembrane region" description="Helical; Name=V" evidence="1">
    <location>
        <begin position="337"/>
        <end position="360"/>
    </location>
</feature>
<feature type="transmembrane region" description="Helical; Name=VI" evidence="1">
    <location>
        <begin position="376"/>
        <end position="402"/>
    </location>
</feature>
<feature type="transmembrane region" description="Helical; Name=VII" evidence="1">
    <location>
        <begin position="424"/>
        <end position="446"/>
    </location>
</feature>
<feature type="transmembrane region" description="Helical; Name=VIII" evidence="1">
    <location>
        <begin position="522"/>
        <end position="540"/>
    </location>
</feature>
<feature type="transmembrane region" description="Helical; Name=IX" evidence="1">
    <location>
        <begin position="580"/>
        <end position="601"/>
    </location>
</feature>
<feature type="transmembrane region" description="Helical; Name=X" evidence="1">
    <location>
        <begin position="655"/>
        <end position="677"/>
    </location>
</feature>
<feature type="transmembrane region" description="Helical; Name=XI" evidence="1">
    <location>
        <begin position="715"/>
        <end position="720" status="greater than"/>
    </location>
</feature>
<feature type="binding site" evidence="1">
    <location>
        <position position="564"/>
    </location>
    <ligand>
        <name>[4Fe-4S] cluster</name>
        <dbReference type="ChEBI" id="CHEBI:49883"/>
        <note>ligand shared between dimeric partners</note>
    </ligand>
</feature>
<feature type="binding site" evidence="1">
    <location>
        <position position="573"/>
    </location>
    <ligand>
        <name>[4Fe-4S] cluster</name>
        <dbReference type="ChEBI" id="CHEBI:49883"/>
        <note>ligand shared between dimeric partners</note>
    </ligand>
</feature>
<feature type="binding site" description="axial binding residue" evidence="1">
    <location>
        <position position="666"/>
    </location>
    <ligand>
        <name>chlorophyll a'</name>
        <dbReference type="ChEBI" id="CHEBI:189419"/>
        <label>A1</label>
    </ligand>
    <ligandPart>
        <name>Mg</name>
        <dbReference type="ChEBI" id="CHEBI:25107"/>
    </ligandPart>
</feature>
<feature type="binding site" description="axial binding residue" evidence="1">
    <location>
        <position position="674"/>
    </location>
    <ligand>
        <name>chlorophyll a</name>
        <dbReference type="ChEBI" id="CHEBI:58416"/>
        <label>A3</label>
    </ligand>
    <ligandPart>
        <name>Mg</name>
        <dbReference type="ChEBI" id="CHEBI:25107"/>
    </ligandPart>
</feature>
<feature type="binding site" evidence="1">
    <location>
        <position position="682"/>
    </location>
    <ligand>
        <name>chlorophyll a</name>
        <dbReference type="ChEBI" id="CHEBI:58416"/>
        <label>A3</label>
    </ligand>
</feature>
<feature type="binding site" evidence="1">
    <location>
        <position position="683"/>
    </location>
    <ligand>
        <name>phylloquinone</name>
        <dbReference type="ChEBI" id="CHEBI:18067"/>
        <label>A</label>
    </ligand>
</feature>
<feature type="non-terminal residue">
    <location>
        <position position="1"/>
    </location>
</feature>
<feature type="non-terminal residue">
    <location>
        <position position="720"/>
    </location>
</feature>
<comment type="function">
    <text>PsaA and PsaB bind P700, the primary electron donor of photosystem I (PSI), as well as the electron acceptors A0, A1 and FX. PSI is a plastocyanin-ferredoxin oxidoreductase, converting photonic excitation into a charge separation, which transfers an electron from the donor P700 chlorophyll pair to the spectroscopically characterized acceptors A0, A1, FX, FA and FB in turn. Oxidized P700 is reduced on the lumenal side of the thylakoid membrane by plastocyanin.</text>
</comment>
<comment type="catalytic activity">
    <reaction evidence="1">
        <text>reduced [plastocyanin] + hnu + oxidized [2Fe-2S]-[ferredoxin] = oxidized [plastocyanin] + reduced [2Fe-2S]-[ferredoxin]</text>
        <dbReference type="Rhea" id="RHEA:30407"/>
        <dbReference type="Rhea" id="RHEA-COMP:10000"/>
        <dbReference type="Rhea" id="RHEA-COMP:10001"/>
        <dbReference type="Rhea" id="RHEA-COMP:10039"/>
        <dbReference type="Rhea" id="RHEA-COMP:10040"/>
        <dbReference type="ChEBI" id="CHEBI:29036"/>
        <dbReference type="ChEBI" id="CHEBI:30212"/>
        <dbReference type="ChEBI" id="CHEBI:33737"/>
        <dbReference type="ChEBI" id="CHEBI:33738"/>
        <dbReference type="ChEBI" id="CHEBI:49552"/>
        <dbReference type="EC" id="1.97.1.12"/>
    </reaction>
</comment>
<comment type="cofactor">
    <text evidence="1">P700 is a chlorophyll a/chlorophyll a' dimer, A0 is one or more chlorophyll a, A1 is one or both phylloquinones and FX is a shared 4Fe-4S iron-sulfur center.</text>
</comment>
<comment type="subunit">
    <text evidence="1">The PsaA/B heterodimer binds the P700 chlorophyll special pair and subsequent electron acceptors. PSI consists of a core antenna complex that captures photons, and an electron transfer chain that converts photonic excitation into a charge separation. The eukaryotic PSI reaction center is composed of at least 11 subunits.</text>
</comment>
<comment type="subcellular location">
    <subcellularLocation>
        <location evidence="1">Plastid</location>
        <location evidence="1">Chloroplast thylakoid membrane</location>
        <topology evidence="1">Multi-pass membrane protein</topology>
    </subcellularLocation>
</comment>
<comment type="similarity">
    <text evidence="1">Belongs to the PsaA/PsaB family.</text>
</comment>
<gene>
    <name evidence="1" type="primary">psaA</name>
</gene>
<proteinExistence type="inferred from homology"/>
<evidence type="ECO:0000255" key="1">
    <source>
        <dbReference type="HAMAP-Rule" id="MF_00458"/>
    </source>
</evidence>
<protein>
    <recommendedName>
        <fullName evidence="1">Photosystem I P700 chlorophyll a apoprotein A1</fullName>
        <ecNumber evidence="1">1.97.1.12</ecNumber>
    </recommendedName>
    <alternativeName>
        <fullName evidence="1">PSI-A</fullName>
    </alternativeName>
    <alternativeName>
        <fullName evidence="1">PsaA</fullName>
    </alternativeName>
</protein>
<keyword id="KW-0004">4Fe-4S</keyword>
<keyword id="KW-0148">Chlorophyll</keyword>
<keyword id="KW-0150">Chloroplast</keyword>
<keyword id="KW-0157">Chromophore</keyword>
<keyword id="KW-0249">Electron transport</keyword>
<keyword id="KW-0408">Iron</keyword>
<keyword id="KW-0411">Iron-sulfur</keyword>
<keyword id="KW-0460">Magnesium</keyword>
<keyword id="KW-0472">Membrane</keyword>
<keyword id="KW-0479">Metal-binding</keyword>
<keyword id="KW-0560">Oxidoreductase</keyword>
<keyword id="KW-0602">Photosynthesis</keyword>
<keyword id="KW-0603">Photosystem I</keyword>
<keyword id="KW-0934">Plastid</keyword>
<keyword id="KW-0793">Thylakoid</keyword>
<keyword id="KW-0812">Transmembrane</keyword>
<keyword id="KW-1133">Transmembrane helix</keyword>
<keyword id="KW-0813">Transport</keyword>
<name>PSAA_SEQSE</name>
<sequence length="720" mass="80039">IKIVVERDPIKTSFEKWAKPGHFSKTLAKGPNTTTWIWNLHADAHDFDSHTNDLEEISRKVFSAHFGQLAIIFIWLSGMYFHGARFSNYEAWLGDPTHIKPSAQVVWPIVGQEILNGDVGGGFRGIQITSGFFQIWRASGITSELQLYCTAIGALIFAALMLFAGWFHYHKAAPKLAWFQDVESMLNHHLAGLLGLGSLSWAGHQIHVSLPINELLDAGVDPKEIPLPHEFILNRELLAQLYPSFAKGLTPFFTLNWSEYSEFLTFRGGLNPVTGGLWLTDTAHHHLAIAILFLIAGHMYRTNWSIGHNLKEILEAHKGPFTGEGHRGLYEILTTSWHAQLALNLAMLGSLTIVVAHHMYSMPPYPYLATDYGTQLSLFTHHMWIGGFLIVGAAAHAAIFMVRDYDPTTQYNNLLDRVLRHRDAIVSHLNWACIFLGFHSFGLYIHNDTMSALGRPKDMFSDTAIQLQPIFAQWIQNTHALAPSLTAPDATASTSLTWGGGDLVAVGAKVALLPIPLGTADFLVHHIHAFTIHVTVLILLKGVLFARSSRLIPDKVNLGFRFPCDGPGRGGTCQVSAWDHVFLGLFWMYNAISVVIFHFSWKMQSDVWGSISDQGVVTHITGGNFAQSSITINGWLRDFLWAQASQVIQSYGSSLSAYGLLFLGAHFVWAFSLMFLFSGRGYWQELIESIVWAHNKLKVAPAIQPRALSIVQGRAVGVAH</sequence>
<reference key="1">
    <citation type="journal article" date="2000" name="Mol. Biol. Evol.">
        <title>Error, bias, and long-branch attraction in data for two chloroplast photosystem genes in seed plants.</title>
        <authorList>
            <person name="Sanderson M.J."/>
            <person name="Wojciechowski M.F."/>
            <person name="Hu J.-M."/>
            <person name="Sher Khan T."/>
            <person name="Brady S.G."/>
        </authorList>
    </citation>
    <scope>NUCLEOTIDE SEQUENCE [GENOMIC DNA]</scope>
</reference>
<geneLocation type="chloroplast"/>
<accession>Q9MUK3</accession>
<dbReference type="EC" id="1.97.1.12" evidence="1"/>
<dbReference type="EMBL" id="AF180012">
    <property type="protein sequence ID" value="AAF29813.1"/>
    <property type="molecule type" value="Genomic_DNA"/>
</dbReference>
<dbReference type="SMR" id="Q9MUK3"/>
<dbReference type="GO" id="GO:0009535">
    <property type="term" value="C:chloroplast thylakoid membrane"/>
    <property type="evidence" value="ECO:0007669"/>
    <property type="project" value="UniProtKB-SubCell"/>
</dbReference>
<dbReference type="GO" id="GO:0009522">
    <property type="term" value="C:photosystem I"/>
    <property type="evidence" value="ECO:0007669"/>
    <property type="project" value="UniProtKB-KW"/>
</dbReference>
<dbReference type="GO" id="GO:0051539">
    <property type="term" value="F:4 iron, 4 sulfur cluster binding"/>
    <property type="evidence" value="ECO:0007669"/>
    <property type="project" value="UniProtKB-KW"/>
</dbReference>
<dbReference type="GO" id="GO:0016168">
    <property type="term" value="F:chlorophyll binding"/>
    <property type="evidence" value="ECO:0007669"/>
    <property type="project" value="UniProtKB-KW"/>
</dbReference>
<dbReference type="GO" id="GO:0046872">
    <property type="term" value="F:metal ion binding"/>
    <property type="evidence" value="ECO:0007669"/>
    <property type="project" value="UniProtKB-KW"/>
</dbReference>
<dbReference type="GO" id="GO:0016491">
    <property type="term" value="F:oxidoreductase activity"/>
    <property type="evidence" value="ECO:0007669"/>
    <property type="project" value="UniProtKB-KW"/>
</dbReference>
<dbReference type="GO" id="GO:0015979">
    <property type="term" value="P:photosynthesis"/>
    <property type="evidence" value="ECO:0007669"/>
    <property type="project" value="UniProtKB-KW"/>
</dbReference>
<dbReference type="FunFam" id="1.20.1130.10:FF:000001">
    <property type="entry name" value="Photosystem I P700 chlorophyll a apoprotein A2"/>
    <property type="match status" value="1"/>
</dbReference>
<dbReference type="Gene3D" id="1.20.1130.10">
    <property type="entry name" value="Photosystem I PsaA/PsaB"/>
    <property type="match status" value="1"/>
</dbReference>
<dbReference type="HAMAP" id="MF_00458">
    <property type="entry name" value="PSI_PsaA"/>
    <property type="match status" value="1"/>
</dbReference>
<dbReference type="InterPro" id="IPR006243">
    <property type="entry name" value="PSI_PsaA"/>
</dbReference>
<dbReference type="InterPro" id="IPR001280">
    <property type="entry name" value="PSI_PsaA/B"/>
</dbReference>
<dbReference type="InterPro" id="IPR020586">
    <property type="entry name" value="PSI_PsaA/B_CS"/>
</dbReference>
<dbReference type="InterPro" id="IPR036408">
    <property type="entry name" value="PSI_PsaA/B_sf"/>
</dbReference>
<dbReference type="NCBIfam" id="TIGR01335">
    <property type="entry name" value="psaA"/>
    <property type="match status" value="1"/>
</dbReference>
<dbReference type="PANTHER" id="PTHR30128">
    <property type="entry name" value="OUTER MEMBRANE PROTEIN, OMPA-RELATED"/>
    <property type="match status" value="1"/>
</dbReference>
<dbReference type="PANTHER" id="PTHR30128:SF19">
    <property type="entry name" value="PHOTOSYSTEM I P700 CHLOROPHYLL A APOPROTEIN A1-RELATED"/>
    <property type="match status" value="1"/>
</dbReference>
<dbReference type="Pfam" id="PF00223">
    <property type="entry name" value="PsaA_PsaB"/>
    <property type="match status" value="1"/>
</dbReference>
<dbReference type="PIRSF" id="PIRSF002905">
    <property type="entry name" value="PSI_A"/>
    <property type="match status" value="1"/>
</dbReference>
<dbReference type="PRINTS" id="PR00257">
    <property type="entry name" value="PHOTSYSPSAAB"/>
</dbReference>
<dbReference type="SUPFAM" id="SSF81558">
    <property type="entry name" value="Photosystem I subunits PsaA/PsaB"/>
    <property type="match status" value="1"/>
</dbReference>
<dbReference type="PROSITE" id="PS00419">
    <property type="entry name" value="PHOTOSYSTEM_I_PSAAB"/>
    <property type="match status" value="1"/>
</dbReference>
<organism>
    <name type="scientific">Sequoia sempervirens</name>
    <name type="common">California redwood</name>
    <name type="synonym">Taxodium sempervirens</name>
    <dbReference type="NCBI Taxonomy" id="28980"/>
    <lineage>
        <taxon>Eukaryota</taxon>
        <taxon>Viridiplantae</taxon>
        <taxon>Streptophyta</taxon>
        <taxon>Embryophyta</taxon>
        <taxon>Tracheophyta</taxon>
        <taxon>Spermatophyta</taxon>
        <taxon>Pinopsida</taxon>
        <taxon>Pinidae</taxon>
        <taxon>Conifers II</taxon>
        <taxon>Cupressales</taxon>
        <taxon>Cupressaceae</taxon>
        <taxon>Sequoia</taxon>
    </lineage>
</organism>